<evidence type="ECO:0000255" key="1">
    <source>
        <dbReference type="HAMAP-Rule" id="MF_01846"/>
    </source>
</evidence>
<name>NUDI_ECOK1</name>
<reference key="1">
    <citation type="journal article" date="2007" name="J. Bacteriol.">
        <title>The genome sequence of avian pathogenic Escherichia coli strain O1:K1:H7 shares strong similarities with human extraintestinal pathogenic E. coli genomes.</title>
        <authorList>
            <person name="Johnson T.J."/>
            <person name="Kariyawasam S."/>
            <person name="Wannemuehler Y."/>
            <person name="Mangiamele P."/>
            <person name="Johnson S.J."/>
            <person name="Doetkott C."/>
            <person name="Skyberg J.A."/>
            <person name="Lynne A.M."/>
            <person name="Johnson J.R."/>
            <person name="Nolan L.K."/>
        </authorList>
    </citation>
    <scope>NUCLEOTIDE SEQUENCE [LARGE SCALE GENOMIC DNA]</scope>
</reference>
<accession>A1ADA3</accession>
<dbReference type="EC" id="3.6.1.9" evidence="1"/>
<dbReference type="EC" id="3.6.1.12" evidence="1"/>
<dbReference type="EC" id="3.6.1.-" evidence="1"/>
<dbReference type="EC" id="3.6.1.23" evidence="1"/>
<dbReference type="EMBL" id="CP000468">
    <property type="protein sequence ID" value="ABJ01643.1"/>
    <property type="molecule type" value="Genomic_DNA"/>
</dbReference>
<dbReference type="RefSeq" id="WP_001249884.1">
    <property type="nucleotide sequence ID" value="NZ_CADILS010000004.1"/>
</dbReference>
<dbReference type="SMR" id="A1ADA3"/>
<dbReference type="GeneID" id="75172382"/>
<dbReference type="KEGG" id="ecv:APECO1_4310"/>
<dbReference type="HOGENOM" id="CLU_037162_31_0_6"/>
<dbReference type="Proteomes" id="UP000008216">
    <property type="component" value="Chromosome"/>
</dbReference>
<dbReference type="GO" id="GO:0047840">
    <property type="term" value="F:dCTP diphosphatase activity"/>
    <property type="evidence" value="ECO:0007669"/>
    <property type="project" value="UniProtKB-EC"/>
</dbReference>
<dbReference type="GO" id="GO:0036218">
    <property type="term" value="F:dTTP diphosphatase activity"/>
    <property type="evidence" value="ECO:0007669"/>
    <property type="project" value="RHEA"/>
</dbReference>
<dbReference type="GO" id="GO:0004170">
    <property type="term" value="F:dUTP diphosphatase activity"/>
    <property type="evidence" value="ECO:0007669"/>
    <property type="project" value="UniProtKB-EC"/>
</dbReference>
<dbReference type="GO" id="GO:0000287">
    <property type="term" value="F:magnesium ion binding"/>
    <property type="evidence" value="ECO:0007669"/>
    <property type="project" value="UniProtKB-UniRule"/>
</dbReference>
<dbReference type="FunFam" id="3.90.79.10:FF:000039">
    <property type="entry name" value="Nucleoside triphosphatase NudI"/>
    <property type="match status" value="1"/>
</dbReference>
<dbReference type="Gene3D" id="3.90.79.10">
    <property type="entry name" value="Nucleoside Triphosphate Pyrophosphohydrolase"/>
    <property type="match status" value="1"/>
</dbReference>
<dbReference type="HAMAP" id="MF_01846">
    <property type="entry name" value="Nudix_NudI"/>
    <property type="match status" value="1"/>
</dbReference>
<dbReference type="InterPro" id="IPR023781">
    <property type="entry name" value="Nucleoside_triphosphatase_NudI"/>
</dbReference>
<dbReference type="InterPro" id="IPR020476">
    <property type="entry name" value="Nudix_hydrolase"/>
</dbReference>
<dbReference type="InterPro" id="IPR015797">
    <property type="entry name" value="NUDIX_hydrolase-like_dom_sf"/>
</dbReference>
<dbReference type="InterPro" id="IPR020084">
    <property type="entry name" value="NUDIX_hydrolase_CS"/>
</dbReference>
<dbReference type="InterPro" id="IPR000086">
    <property type="entry name" value="NUDIX_hydrolase_dom"/>
</dbReference>
<dbReference type="NCBIfam" id="NF012016">
    <property type="entry name" value="PRK15472.1"/>
    <property type="match status" value="1"/>
</dbReference>
<dbReference type="PANTHER" id="PTHR43046">
    <property type="entry name" value="GDP-MANNOSE MANNOSYL HYDROLASE"/>
    <property type="match status" value="1"/>
</dbReference>
<dbReference type="PANTHER" id="PTHR43046:SF14">
    <property type="entry name" value="MUTT_NUDIX FAMILY PROTEIN"/>
    <property type="match status" value="1"/>
</dbReference>
<dbReference type="Pfam" id="PF00293">
    <property type="entry name" value="NUDIX"/>
    <property type="match status" value="1"/>
</dbReference>
<dbReference type="PRINTS" id="PR00502">
    <property type="entry name" value="NUDIXFAMILY"/>
</dbReference>
<dbReference type="SUPFAM" id="SSF55811">
    <property type="entry name" value="Nudix"/>
    <property type="match status" value="1"/>
</dbReference>
<dbReference type="PROSITE" id="PS51462">
    <property type="entry name" value="NUDIX"/>
    <property type="match status" value="1"/>
</dbReference>
<dbReference type="PROSITE" id="PS00893">
    <property type="entry name" value="NUDIX_BOX"/>
    <property type="match status" value="1"/>
</dbReference>
<proteinExistence type="inferred from homology"/>
<sequence>MRQRTIVCPLIQNDGAYLLCKMADDRGVFPGQWALSGGGVEPGERIEEALRREIREELGEQLLLTEITPWTFSDDIRTKTYADGRKEEIYMIYLIFDCVSANREVKINEEFQDYAWVKPEDLVHYDLNVATRKTLRLKGLL</sequence>
<organism>
    <name type="scientific">Escherichia coli O1:K1 / APEC</name>
    <dbReference type="NCBI Taxonomy" id="405955"/>
    <lineage>
        <taxon>Bacteria</taxon>
        <taxon>Pseudomonadati</taxon>
        <taxon>Pseudomonadota</taxon>
        <taxon>Gammaproteobacteria</taxon>
        <taxon>Enterobacterales</taxon>
        <taxon>Enterobacteriaceae</taxon>
        <taxon>Escherichia</taxon>
    </lineage>
</organism>
<gene>
    <name evidence="1" type="primary">nudI</name>
    <name type="ordered locus">Ecok1_21490</name>
    <name type="ORF">APECO1_4310</name>
</gene>
<feature type="chain" id="PRO_0000342130" description="Nucleoside triphosphatase NudI">
    <location>
        <begin position="1"/>
        <end position="141"/>
    </location>
</feature>
<feature type="domain" description="Nudix hydrolase" evidence="1">
    <location>
        <begin position="1"/>
        <end position="141"/>
    </location>
</feature>
<feature type="short sequence motif" description="Nudix box">
    <location>
        <begin position="38"/>
        <end position="59"/>
    </location>
</feature>
<protein>
    <recommendedName>
        <fullName evidence="1">Nucleoside triphosphatase NudI</fullName>
        <ecNumber evidence="1">3.6.1.9</ecNumber>
    </recommendedName>
    <alternativeName>
        <fullName evidence="1">Nucleotide diphosphatase NudI</fullName>
    </alternativeName>
    <alternativeName>
        <fullName evidence="1">Pyrimidine deoxynucleoside triphosphate diphosphatase</fullName>
    </alternativeName>
    <alternativeName>
        <fullName evidence="1">dCTP diphosphatase</fullName>
        <ecNumber evidence="1">3.6.1.12</ecNumber>
    </alternativeName>
    <alternativeName>
        <fullName evidence="1">dTTP diphosphatase</fullName>
        <ecNumber evidence="1">3.6.1.-</ecNumber>
    </alternativeName>
    <alternativeName>
        <fullName evidence="1">dUTP diphosphatase</fullName>
        <ecNumber evidence="1">3.6.1.23</ecNumber>
    </alternativeName>
</protein>
<comment type="function">
    <text evidence="1">Catalyzes the hydrolysis of nucleoside triphosphates, with a preference for pyrimidine deoxynucleoside triphosphates (dUTP, dTTP and dCTP).</text>
</comment>
<comment type="catalytic activity">
    <reaction evidence="1">
        <text>a ribonucleoside 5'-triphosphate + H2O = a ribonucleoside 5'-phosphate + diphosphate + H(+)</text>
        <dbReference type="Rhea" id="RHEA:23996"/>
        <dbReference type="ChEBI" id="CHEBI:15377"/>
        <dbReference type="ChEBI" id="CHEBI:15378"/>
        <dbReference type="ChEBI" id="CHEBI:33019"/>
        <dbReference type="ChEBI" id="CHEBI:58043"/>
        <dbReference type="ChEBI" id="CHEBI:61557"/>
        <dbReference type="EC" id="3.6.1.9"/>
    </reaction>
</comment>
<comment type="catalytic activity">
    <reaction evidence="1">
        <text>a 2'-deoxyribonucleoside 5'-triphosphate + H2O = a 2'-deoxyribonucleoside 5'-phosphate + diphosphate + H(+)</text>
        <dbReference type="Rhea" id="RHEA:44644"/>
        <dbReference type="ChEBI" id="CHEBI:15377"/>
        <dbReference type="ChEBI" id="CHEBI:15378"/>
        <dbReference type="ChEBI" id="CHEBI:33019"/>
        <dbReference type="ChEBI" id="CHEBI:61560"/>
        <dbReference type="ChEBI" id="CHEBI:65317"/>
        <dbReference type="EC" id="3.6.1.9"/>
    </reaction>
</comment>
<comment type="catalytic activity">
    <reaction evidence="1">
        <text>dUTP + H2O = dUMP + diphosphate + H(+)</text>
        <dbReference type="Rhea" id="RHEA:10248"/>
        <dbReference type="ChEBI" id="CHEBI:15377"/>
        <dbReference type="ChEBI" id="CHEBI:15378"/>
        <dbReference type="ChEBI" id="CHEBI:33019"/>
        <dbReference type="ChEBI" id="CHEBI:61555"/>
        <dbReference type="ChEBI" id="CHEBI:246422"/>
        <dbReference type="EC" id="3.6.1.9"/>
    </reaction>
</comment>
<comment type="catalytic activity">
    <reaction evidence="1">
        <text>dUTP + H2O = dUMP + diphosphate + H(+)</text>
        <dbReference type="Rhea" id="RHEA:10248"/>
        <dbReference type="ChEBI" id="CHEBI:15377"/>
        <dbReference type="ChEBI" id="CHEBI:15378"/>
        <dbReference type="ChEBI" id="CHEBI:33019"/>
        <dbReference type="ChEBI" id="CHEBI:61555"/>
        <dbReference type="ChEBI" id="CHEBI:246422"/>
        <dbReference type="EC" id="3.6.1.23"/>
    </reaction>
</comment>
<comment type="catalytic activity">
    <reaction evidence="1">
        <text>dTTP + H2O = dTMP + diphosphate + H(+)</text>
        <dbReference type="Rhea" id="RHEA:28534"/>
        <dbReference type="ChEBI" id="CHEBI:15377"/>
        <dbReference type="ChEBI" id="CHEBI:15378"/>
        <dbReference type="ChEBI" id="CHEBI:33019"/>
        <dbReference type="ChEBI" id="CHEBI:37568"/>
        <dbReference type="ChEBI" id="CHEBI:63528"/>
        <dbReference type="EC" id="3.6.1.9"/>
    </reaction>
</comment>
<comment type="catalytic activity">
    <reaction evidence="1">
        <text>dCTP + H2O = dCMP + diphosphate + H(+)</text>
        <dbReference type="Rhea" id="RHEA:22636"/>
        <dbReference type="ChEBI" id="CHEBI:15377"/>
        <dbReference type="ChEBI" id="CHEBI:15378"/>
        <dbReference type="ChEBI" id="CHEBI:33019"/>
        <dbReference type="ChEBI" id="CHEBI:57566"/>
        <dbReference type="ChEBI" id="CHEBI:61481"/>
        <dbReference type="EC" id="3.6.1.9"/>
    </reaction>
</comment>
<comment type="catalytic activity">
    <reaction evidence="1">
        <text>dCTP + H2O = dCMP + diphosphate + H(+)</text>
        <dbReference type="Rhea" id="RHEA:22636"/>
        <dbReference type="ChEBI" id="CHEBI:15377"/>
        <dbReference type="ChEBI" id="CHEBI:15378"/>
        <dbReference type="ChEBI" id="CHEBI:33019"/>
        <dbReference type="ChEBI" id="CHEBI:57566"/>
        <dbReference type="ChEBI" id="CHEBI:61481"/>
        <dbReference type="EC" id="3.6.1.12"/>
    </reaction>
</comment>
<comment type="cofactor">
    <cofactor evidence="1">
        <name>Mg(2+)</name>
        <dbReference type="ChEBI" id="CHEBI:18420"/>
    </cofactor>
</comment>
<comment type="subunit">
    <text evidence="1">Monomer.</text>
</comment>
<comment type="similarity">
    <text evidence="1">Belongs to the Nudix hydrolase family. NudI subfamily.</text>
</comment>
<keyword id="KW-0378">Hydrolase</keyword>
<keyword id="KW-0460">Magnesium</keyword>
<keyword id="KW-1185">Reference proteome</keyword>